<dbReference type="EC" id="3.5.1.5" evidence="1"/>
<dbReference type="EMBL" id="CP000680">
    <property type="protein sequence ID" value="ABP83461.1"/>
    <property type="molecule type" value="Genomic_DNA"/>
</dbReference>
<dbReference type="SMR" id="A4XQ45"/>
<dbReference type="STRING" id="399739.Pmen_0693"/>
<dbReference type="KEGG" id="pmy:Pmen_0693"/>
<dbReference type="PATRIC" id="fig|399739.8.peg.701"/>
<dbReference type="eggNOG" id="COG0832">
    <property type="taxonomic scope" value="Bacteria"/>
</dbReference>
<dbReference type="HOGENOM" id="CLU_129707_1_1_6"/>
<dbReference type="OrthoDB" id="9797217at2"/>
<dbReference type="UniPathway" id="UPA00258">
    <property type="reaction ID" value="UER00370"/>
</dbReference>
<dbReference type="GO" id="GO:0035550">
    <property type="term" value="C:urease complex"/>
    <property type="evidence" value="ECO:0007669"/>
    <property type="project" value="InterPro"/>
</dbReference>
<dbReference type="GO" id="GO:0009039">
    <property type="term" value="F:urease activity"/>
    <property type="evidence" value="ECO:0007669"/>
    <property type="project" value="UniProtKB-UniRule"/>
</dbReference>
<dbReference type="GO" id="GO:0043419">
    <property type="term" value="P:urea catabolic process"/>
    <property type="evidence" value="ECO:0007669"/>
    <property type="project" value="UniProtKB-UniRule"/>
</dbReference>
<dbReference type="CDD" id="cd00407">
    <property type="entry name" value="Urease_beta"/>
    <property type="match status" value="1"/>
</dbReference>
<dbReference type="FunFam" id="2.10.150.10:FF:000001">
    <property type="entry name" value="Urease subunit beta"/>
    <property type="match status" value="1"/>
</dbReference>
<dbReference type="Gene3D" id="2.10.150.10">
    <property type="entry name" value="Urease, beta subunit"/>
    <property type="match status" value="1"/>
</dbReference>
<dbReference type="HAMAP" id="MF_01954">
    <property type="entry name" value="Urease_beta"/>
    <property type="match status" value="1"/>
</dbReference>
<dbReference type="InterPro" id="IPR002019">
    <property type="entry name" value="Urease_beta-like"/>
</dbReference>
<dbReference type="InterPro" id="IPR036461">
    <property type="entry name" value="Urease_betasu_sf"/>
</dbReference>
<dbReference type="InterPro" id="IPR050069">
    <property type="entry name" value="Urease_subunit"/>
</dbReference>
<dbReference type="NCBIfam" id="NF009682">
    <property type="entry name" value="PRK13203.1"/>
    <property type="match status" value="1"/>
</dbReference>
<dbReference type="NCBIfam" id="TIGR00192">
    <property type="entry name" value="urease_beta"/>
    <property type="match status" value="1"/>
</dbReference>
<dbReference type="PANTHER" id="PTHR33569">
    <property type="entry name" value="UREASE"/>
    <property type="match status" value="1"/>
</dbReference>
<dbReference type="PANTHER" id="PTHR33569:SF1">
    <property type="entry name" value="UREASE"/>
    <property type="match status" value="1"/>
</dbReference>
<dbReference type="Pfam" id="PF00699">
    <property type="entry name" value="Urease_beta"/>
    <property type="match status" value="1"/>
</dbReference>
<dbReference type="SUPFAM" id="SSF51278">
    <property type="entry name" value="Urease, beta-subunit"/>
    <property type="match status" value="1"/>
</dbReference>
<gene>
    <name evidence="1" type="primary">ureB</name>
    <name type="ordered locus">Pmen_0693</name>
</gene>
<protein>
    <recommendedName>
        <fullName evidence="1">Urease subunit beta</fullName>
        <ecNumber evidence="1">3.5.1.5</ecNumber>
    </recommendedName>
    <alternativeName>
        <fullName evidence="1">Urea amidohydrolase subunit beta</fullName>
    </alternativeName>
</protein>
<reference key="1">
    <citation type="submission" date="2007-04" db="EMBL/GenBank/DDBJ databases">
        <title>Complete sequence of Pseudomonas mendocina ymp.</title>
        <authorList>
            <consortium name="US DOE Joint Genome Institute"/>
            <person name="Copeland A."/>
            <person name="Lucas S."/>
            <person name="Lapidus A."/>
            <person name="Barry K."/>
            <person name="Glavina del Rio T."/>
            <person name="Dalin E."/>
            <person name="Tice H."/>
            <person name="Pitluck S."/>
            <person name="Kiss H."/>
            <person name="Brettin T."/>
            <person name="Detter J.C."/>
            <person name="Bruce D."/>
            <person name="Han C."/>
            <person name="Schmutz J."/>
            <person name="Larimer F."/>
            <person name="Land M."/>
            <person name="Hauser L."/>
            <person name="Kyrpides N."/>
            <person name="Mikhailova N."/>
            <person name="Hersman L."/>
            <person name="Dubois J."/>
            <person name="Maurice P."/>
            <person name="Richardson P."/>
        </authorList>
    </citation>
    <scope>NUCLEOTIDE SEQUENCE [LARGE SCALE GENOMIC DNA]</scope>
    <source>
        <strain>ymp</strain>
    </source>
</reference>
<name>URE2_ECTM1</name>
<accession>A4XQ45</accession>
<evidence type="ECO:0000255" key="1">
    <source>
        <dbReference type="HAMAP-Rule" id="MF_01954"/>
    </source>
</evidence>
<keyword id="KW-0963">Cytoplasm</keyword>
<keyword id="KW-0378">Hydrolase</keyword>
<comment type="catalytic activity">
    <reaction evidence="1">
        <text>urea + 2 H2O + H(+) = hydrogencarbonate + 2 NH4(+)</text>
        <dbReference type="Rhea" id="RHEA:20557"/>
        <dbReference type="ChEBI" id="CHEBI:15377"/>
        <dbReference type="ChEBI" id="CHEBI:15378"/>
        <dbReference type="ChEBI" id="CHEBI:16199"/>
        <dbReference type="ChEBI" id="CHEBI:17544"/>
        <dbReference type="ChEBI" id="CHEBI:28938"/>
        <dbReference type="EC" id="3.5.1.5"/>
    </reaction>
</comment>
<comment type="pathway">
    <text evidence="1">Nitrogen metabolism; urea degradation; CO(2) and NH(3) from urea (urease route): step 1/1.</text>
</comment>
<comment type="subunit">
    <text evidence="1">Heterotrimer of UreA (gamma), UreB (beta) and UreC (alpha) subunits. Three heterotrimers associate to form the active enzyme.</text>
</comment>
<comment type="subcellular location">
    <subcellularLocation>
        <location evidence="1">Cytoplasm</location>
    </subcellularLocation>
</comment>
<comment type="similarity">
    <text evidence="1">Belongs to the urease beta subunit family.</text>
</comment>
<organism>
    <name type="scientific">Ectopseudomonas mendocina (strain ymp)</name>
    <name type="common">Pseudomonas mendocina</name>
    <dbReference type="NCBI Taxonomy" id="399739"/>
    <lineage>
        <taxon>Bacteria</taxon>
        <taxon>Pseudomonadati</taxon>
        <taxon>Pseudomonadota</taxon>
        <taxon>Gammaproteobacteria</taxon>
        <taxon>Pseudomonadales</taxon>
        <taxon>Pseudomonadaceae</taxon>
        <taxon>Ectopseudomonas</taxon>
    </lineage>
</organism>
<feature type="chain" id="PRO_1000070761" description="Urease subunit beta">
    <location>
        <begin position="1"/>
        <end position="101"/>
    </location>
</feature>
<sequence>MIPGQYQIADGEIELNAGRRTLTLSVANSGDRPIQVGSHYHFFETNDALIFDRASTRGMRLNIPAGTAVRFEPGQSREVELVDLAGARRVFGFAGRVMGDL</sequence>
<proteinExistence type="inferred from homology"/>